<comment type="function">
    <text evidence="2">Involved in the degradation of 3,6-anhydro-L-galactose, which is the major monomeric sugar of red macroalgae. Catalyzes the oxidation of 3,6-anhydro-L-galactose (AHG) to form 3,6-anhydrogalactonate (AHGA).</text>
</comment>
<comment type="catalytic activity">
    <reaction evidence="2">
        <text>3,6-anhydro-alpha-L-galactopyranose + NADP(+) + H2O = 3,6-anhydro-L-galactonate + NADPH + 2 H(+)</text>
        <dbReference type="Rhea" id="RHEA:40803"/>
        <dbReference type="ChEBI" id="CHEBI:15377"/>
        <dbReference type="ChEBI" id="CHEBI:15378"/>
        <dbReference type="ChEBI" id="CHEBI:57783"/>
        <dbReference type="ChEBI" id="CHEBI:58349"/>
        <dbReference type="ChEBI" id="CHEBI:83433"/>
        <dbReference type="ChEBI" id="CHEBI:83435"/>
        <dbReference type="EC" id="1.2.1.92"/>
    </reaction>
</comment>
<comment type="catalytic activity">
    <reaction evidence="2">
        <text>3,6-anhydro-alpha-L-galactopyranose + NAD(+) + H2O = 3,6-anhydro-L-galactonate + NADH + 2 H(+)</text>
        <dbReference type="Rhea" id="RHEA:43568"/>
        <dbReference type="ChEBI" id="CHEBI:15377"/>
        <dbReference type="ChEBI" id="CHEBI:15378"/>
        <dbReference type="ChEBI" id="CHEBI:57540"/>
        <dbReference type="ChEBI" id="CHEBI:57945"/>
        <dbReference type="ChEBI" id="CHEBI:83433"/>
        <dbReference type="ChEBI" id="CHEBI:83435"/>
        <dbReference type="EC" id="1.2.1.92"/>
    </reaction>
</comment>
<comment type="biotechnology">
    <text evidence="5">Could be used for bioconversion of red macroalgal biomass into biofuels or industrial chemicals.</text>
</comment>
<comment type="similarity">
    <text evidence="4">Belongs to the aldehyde dehydrogenase family.</text>
</comment>
<evidence type="ECO:0000250" key="1">
    <source>
        <dbReference type="UniProtKB" id="P25526"/>
    </source>
</evidence>
<evidence type="ECO:0000269" key="2">
    <source>
    </source>
</evidence>
<evidence type="ECO:0000303" key="3">
    <source>
    </source>
</evidence>
<evidence type="ECO:0000305" key="4"/>
<evidence type="ECO:0000305" key="5">
    <source>
    </source>
</evidence>
<evidence type="ECO:0000312" key="6">
    <source>
        <dbReference type="EMBL" id="AEX22330.1"/>
    </source>
</evidence>
<protein>
    <recommendedName>
        <fullName evidence="4">3,6-anhydro-alpha-L-galactose dehydrogenase</fullName>
        <shortName evidence="3">AHG dehydrogenase</shortName>
        <ecNumber evidence="2">1.2.1.92</ecNumber>
    </recommendedName>
</protein>
<reference key="1">
    <citation type="journal article" date="2012" name="J. Bacteriol.">
        <title>Genome sequence of Vibrio sp. strain EJY3, an agarolytic marine bacterium metabolizing 3,6-anhydro-L-galactose as a sole carbon source.</title>
        <authorList>
            <person name="Roh H."/>
            <person name="Yun E.J."/>
            <person name="Lee S."/>
            <person name="Ko H.J."/>
            <person name="Kim S."/>
            <person name="Kim B.Y."/>
            <person name="Song H."/>
            <person name="Lim K.I."/>
            <person name="Kim K.H."/>
            <person name="Choi I.G."/>
        </authorList>
    </citation>
    <scope>NUCLEOTIDE SEQUENCE [LARGE SCALE GENOMIC DNA]</scope>
    <source>
        <strain>EJY3</strain>
    </source>
</reference>
<reference key="2">
    <citation type="journal article" date="2015" name="Environ. Microbiol.">
        <title>The novel catabolic pathway of 3,6-anhydro-L-galactose, the main component of red macroalgae, in a marine bacterium.</title>
        <authorList>
            <person name="Yun E.J."/>
            <person name="Lee S."/>
            <person name="Kim H.T."/>
            <person name="Pelton J.G."/>
            <person name="Kim S."/>
            <person name="Ko H.J."/>
            <person name="Choi I.G."/>
            <person name="Kim K.H."/>
        </authorList>
    </citation>
    <scope>FUNCTION</scope>
    <scope>CATALYTIC ACTIVITY</scope>
    <scope>BIOTECHNOLOGY</scope>
    <source>
        <strain>EJY3</strain>
    </source>
</reference>
<proteinExistence type="evidence at protein level"/>
<accession>H2IFE7</accession>
<sequence length="480" mass="53296">MKRYQMYVDGQWIDAENGKVDQVINPSTEEVLAEIQDGDQDDAERVLSVAKRAQSDWKRVPARQRAELLRKFAQEIRNNREHLAELLVSEQGKLYRVALGEVDVAASFIEYACDWARQMDGDIVQSDNVNEHIWIQKIPRGVVVAITAWNFPFALAGRKIGPALVAGNTIVVKPTSETPLATLELGYIAEKVGIPAGVLNIVTGGGASLGGALTSHRYTNMVTMTGSTPVGQQIIKASANNMAHVQLELGGKAPFIVMEDADLEQAAAAALHSRFDNCGQVCTCNERMYVHSSVYDEFMAIFMEKVQNIKVGNPMDPESDMGPKVNKRELDHMEALVAQALKEGAQLLHGGKRLTEGEFGKGFWFEPTILGNVQQSMTIVHEEAFGPILPVIKFDTFEEVIDYANDSEYGLATMICTRNMKYVHRLTHELECGEIYVNRGHGEQHQGFHNGYKLSGTGGEDGKYGFEQYLEKKTFYVNFD</sequence>
<dbReference type="EC" id="1.2.1.92" evidence="2"/>
<dbReference type="EMBL" id="CP003241">
    <property type="protein sequence ID" value="AEX22330.1"/>
    <property type="molecule type" value="Genomic_DNA"/>
</dbReference>
<dbReference type="RefSeq" id="WP_014232205.1">
    <property type="nucleotide sequence ID" value="NC_016613.1"/>
</dbReference>
<dbReference type="SMR" id="H2IFE7"/>
<dbReference type="KEGG" id="vej:VEJY3_09240"/>
<dbReference type="PATRIC" id="fig|1116375.3.peg.1847"/>
<dbReference type="eggNOG" id="COG1012">
    <property type="taxonomic scope" value="Bacteria"/>
</dbReference>
<dbReference type="HOGENOM" id="CLU_005391_0_0_6"/>
<dbReference type="BioCyc" id="MetaCyc:MONOMER-18902"/>
<dbReference type="BRENDA" id="1.2.1.92">
    <property type="organism ID" value="6640"/>
</dbReference>
<dbReference type="Proteomes" id="UP000006799">
    <property type="component" value="Chromosome 1"/>
</dbReference>
<dbReference type="GO" id="GO:0005829">
    <property type="term" value="C:cytosol"/>
    <property type="evidence" value="ECO:0007669"/>
    <property type="project" value="TreeGrafter"/>
</dbReference>
<dbReference type="GO" id="GO:0004777">
    <property type="term" value="F:succinate-semialdehyde dehydrogenase (NAD+) activity"/>
    <property type="evidence" value="ECO:0007669"/>
    <property type="project" value="TreeGrafter"/>
</dbReference>
<dbReference type="GO" id="GO:0009450">
    <property type="term" value="P:gamma-aminobutyric acid catabolic process"/>
    <property type="evidence" value="ECO:0007669"/>
    <property type="project" value="TreeGrafter"/>
</dbReference>
<dbReference type="CDD" id="cd07088">
    <property type="entry name" value="ALDH_LactADH-AldA"/>
    <property type="match status" value="1"/>
</dbReference>
<dbReference type="FunFam" id="3.40.309.10:FF:000009">
    <property type="entry name" value="Aldehyde dehydrogenase A"/>
    <property type="match status" value="1"/>
</dbReference>
<dbReference type="FunFam" id="3.40.605.10:FF:000007">
    <property type="entry name" value="NAD/NADP-dependent betaine aldehyde dehydrogenase"/>
    <property type="match status" value="1"/>
</dbReference>
<dbReference type="Gene3D" id="3.40.605.10">
    <property type="entry name" value="Aldehyde Dehydrogenase, Chain A, domain 1"/>
    <property type="match status" value="1"/>
</dbReference>
<dbReference type="Gene3D" id="3.40.309.10">
    <property type="entry name" value="Aldehyde Dehydrogenase, Chain A, domain 2"/>
    <property type="match status" value="1"/>
</dbReference>
<dbReference type="InterPro" id="IPR016161">
    <property type="entry name" value="Ald_DH/histidinol_DH"/>
</dbReference>
<dbReference type="InterPro" id="IPR016163">
    <property type="entry name" value="Ald_DH_C"/>
</dbReference>
<dbReference type="InterPro" id="IPR016160">
    <property type="entry name" value="Ald_DH_CS_CYS"/>
</dbReference>
<dbReference type="InterPro" id="IPR029510">
    <property type="entry name" value="Ald_DH_CS_GLU"/>
</dbReference>
<dbReference type="InterPro" id="IPR016162">
    <property type="entry name" value="Ald_DH_N"/>
</dbReference>
<dbReference type="InterPro" id="IPR015590">
    <property type="entry name" value="Aldehyde_DH_dom"/>
</dbReference>
<dbReference type="InterPro" id="IPR050740">
    <property type="entry name" value="Aldehyde_DH_Superfamily"/>
</dbReference>
<dbReference type="NCBIfam" id="NF007497">
    <property type="entry name" value="PRK10090.1"/>
    <property type="match status" value="1"/>
</dbReference>
<dbReference type="PANTHER" id="PTHR43353">
    <property type="entry name" value="SUCCINATE-SEMIALDEHYDE DEHYDROGENASE, MITOCHONDRIAL"/>
    <property type="match status" value="1"/>
</dbReference>
<dbReference type="PANTHER" id="PTHR43353:SF5">
    <property type="entry name" value="SUCCINATE-SEMIALDEHYDE DEHYDROGENASE, MITOCHONDRIAL"/>
    <property type="match status" value="1"/>
</dbReference>
<dbReference type="Pfam" id="PF00171">
    <property type="entry name" value="Aldedh"/>
    <property type="match status" value="1"/>
</dbReference>
<dbReference type="SUPFAM" id="SSF53720">
    <property type="entry name" value="ALDH-like"/>
    <property type="match status" value="1"/>
</dbReference>
<dbReference type="PROSITE" id="PS00070">
    <property type="entry name" value="ALDEHYDE_DEHYDR_CYS"/>
    <property type="match status" value="1"/>
</dbReference>
<dbReference type="PROSITE" id="PS00687">
    <property type="entry name" value="ALDEHYDE_DEHYDR_GLU"/>
    <property type="match status" value="1"/>
</dbReference>
<feature type="chain" id="PRO_0000432212" description="3,6-anhydro-alpha-L-galactose dehydrogenase">
    <location>
        <begin position="1"/>
        <end position="480"/>
    </location>
</feature>
<feature type="active site" description="Proton acceptor" evidence="1">
    <location>
        <position position="248"/>
    </location>
</feature>
<feature type="active site" description="Nucleophile" evidence="1">
    <location>
        <position position="282"/>
    </location>
</feature>
<feature type="binding site" evidence="1">
    <location>
        <begin position="149"/>
        <end position="150"/>
    </location>
    <ligand>
        <name>NADP(+)</name>
        <dbReference type="ChEBI" id="CHEBI:58349"/>
    </ligand>
</feature>
<feature type="binding site" evidence="1">
    <location>
        <begin position="173"/>
        <end position="176"/>
    </location>
    <ligand>
        <name>NADP(+)</name>
        <dbReference type="ChEBI" id="CHEBI:58349"/>
    </ligand>
</feature>
<feature type="binding site" evidence="1">
    <location>
        <begin position="226"/>
        <end position="227"/>
    </location>
    <ligand>
        <name>NADP(+)</name>
        <dbReference type="ChEBI" id="CHEBI:58349"/>
    </ligand>
</feature>
<feature type="binding site" evidence="1">
    <location>
        <position position="249"/>
    </location>
    <ligand>
        <name>NADP(+)</name>
        <dbReference type="ChEBI" id="CHEBI:58349"/>
    </ligand>
</feature>
<feature type="binding site" evidence="1">
    <location>
        <position position="383"/>
    </location>
    <ligand>
        <name>NADP(+)</name>
        <dbReference type="ChEBI" id="CHEBI:58349"/>
    </ligand>
</feature>
<gene>
    <name evidence="3" type="primary">Vejahgd</name>
    <name evidence="6" type="ORF">VEJY3_09240</name>
</gene>
<name>AHGD_VIBSJ</name>
<organism>
    <name type="scientific">Vibrio sp. (strain EJY3)</name>
    <dbReference type="NCBI Taxonomy" id="1116375"/>
    <lineage>
        <taxon>Bacteria</taxon>
        <taxon>Pseudomonadati</taxon>
        <taxon>Pseudomonadota</taxon>
        <taxon>Gammaproteobacteria</taxon>
        <taxon>Vibrionales</taxon>
        <taxon>Vibrionaceae</taxon>
        <taxon>Vibrio</taxon>
    </lineage>
</organism>
<keyword id="KW-0119">Carbohydrate metabolism</keyword>
<keyword id="KW-0520">NAD</keyword>
<keyword id="KW-0521">NADP</keyword>
<keyword id="KW-0560">Oxidoreductase</keyword>